<accession>P28717</accession>
<comment type="function">
    <text>Mating ciliate pheromones (or gamones) are diffusible extracellular communication signals that distinguish different intraspecific classes of cells commonly referred to as 'mating types'. They prepare the latter for conjugation by changing their cell surface properties.</text>
</comment>
<comment type="subcellular location">
    <subcellularLocation>
        <location>Secreted</location>
    </subcellularLocation>
</comment>
<proteinExistence type="evidence at protein level"/>
<keyword id="KW-0903">Direct protein sequencing</keyword>
<keyword id="KW-0588">Pheromone</keyword>
<keyword id="KW-0964">Secreted</keyword>
<keyword id="KW-0732">Signal</keyword>
<feature type="signal peptide" evidence="1">
    <location>
        <begin position="1"/>
        <end position="16"/>
    </location>
</feature>
<feature type="propeptide" id="PRO_0000008678" evidence="1">
    <location>
        <begin position="17"/>
        <end position="52"/>
    </location>
</feature>
<feature type="peptide" id="PRO_0000008679" description="Mating pheromone 3">
    <location>
        <begin position="53"/>
        <end position="151"/>
    </location>
</feature>
<sequence>MKAIFIILAILMVTQAFKMTSKVNTKLQSQIQSKFQSKNKLASTFQTSSQLKYYCWEEPYTSSITGCSTSLACYEASDCSVTGNDQDKCNNVGQNMIDKFFELWGVCINDYETCLQYVDRAWIHYSDSEFCGCTNPEQESAFRDAMDCLQF</sequence>
<organism>
    <name type="scientific">Euplotoides octocarinatus</name>
    <name type="common">Freshwater ciliate</name>
    <name type="synonym">Euplotes octocarinatus</name>
    <dbReference type="NCBI Taxonomy" id="2716877"/>
    <lineage>
        <taxon>Eukaryota</taxon>
        <taxon>Sar</taxon>
        <taxon>Alveolata</taxon>
        <taxon>Ciliophora</taxon>
        <taxon>Intramacronucleata</taxon>
        <taxon>Spirotrichea</taxon>
        <taxon>Hypotrichia</taxon>
        <taxon>Euplotida</taxon>
        <taxon>Euplotidae</taxon>
        <taxon>Euplotes</taxon>
    </lineage>
</organism>
<dbReference type="EMBL" id="M63389">
    <property type="protein sequence ID" value="AAB02123.1"/>
    <property type="status" value="ALT_SEQ"/>
    <property type="molecule type" value="mRNA"/>
</dbReference>
<dbReference type="EMBL" id="X58145">
    <property type="protein sequence ID" value="CAA41151.1"/>
    <property type="molecule type" value="Genomic_DNA"/>
</dbReference>
<dbReference type="PIR" id="A39389">
    <property type="entry name" value="A39389"/>
</dbReference>
<dbReference type="SMR" id="P28717"/>
<dbReference type="GO" id="GO:0005576">
    <property type="term" value="C:extracellular region"/>
    <property type="evidence" value="ECO:0007669"/>
    <property type="project" value="UniProtKB-SubCell"/>
</dbReference>
<dbReference type="GO" id="GO:0005186">
    <property type="term" value="F:pheromone activity"/>
    <property type="evidence" value="ECO:0007669"/>
    <property type="project" value="UniProtKB-KW"/>
</dbReference>
<dbReference type="InterPro" id="IPR008612">
    <property type="entry name" value="Mating_pheromone_EUPOC"/>
</dbReference>
<dbReference type="Pfam" id="PF05842">
    <property type="entry name" value="Euplotes_phero"/>
    <property type="match status" value="1"/>
</dbReference>
<name>MER3_EUPOC</name>
<evidence type="ECO:0000255" key="1"/>
<protein>
    <recommendedName>
        <fullName>Mating pheromone 3</fullName>
    </recommendedName>
</protein>
<gene>
    <name type="primary">PHR3</name>
</gene>
<reference key="1">
    <citation type="journal article" date="1991" name="Proc. Natl. Acad. Sci. U.S.A.">
        <title>UGA is translated as cysteine in pheromone 3 of Euplotes octocarinatus.</title>
        <authorList>
            <person name="Meyer F."/>
            <person name="Schmidt H.J."/>
            <person name="Pluemper E."/>
            <person name="Hasilik A."/>
            <person name="Mersmann G."/>
            <person name="Meyer H.E."/>
            <person name="Engstroem A."/>
            <person name="Heckmann K."/>
        </authorList>
    </citation>
    <scope>NUCLEOTIDE SEQUENCE [MRNA]</scope>
    <scope>PROTEIN SEQUENCE OF 53-88</scope>
    <source>
        <strain>3(58)-IX</strain>
    </source>
</reference>
<reference key="2">
    <citation type="journal article" date="1991" name="Gene">
        <title>Two introns in the pheromone 3-encoding gene of Euplotes octocarinatus.</title>
        <authorList>
            <person name="Bruenen-Nieweler C."/>
            <person name="Schmidt H.J."/>
            <person name="Heckmann K."/>
        </authorList>
    </citation>
    <scope>NUCLEOTIDE SEQUENCE OF 53-151</scope>
    <source>
        <strain>3(58)-IX</strain>
    </source>
</reference>